<evidence type="ECO:0000250" key="1"/>
<evidence type="ECO:0000255" key="2">
    <source>
        <dbReference type="PROSITE-ProRule" id="PRU01082"/>
    </source>
</evidence>
<evidence type="ECO:0000269" key="3">
    <source>
    </source>
</evidence>
<evidence type="ECO:0000269" key="4">
    <source>
    </source>
</evidence>
<evidence type="ECO:0000269" key="5">
    <source>
    </source>
</evidence>
<evidence type="ECO:0000269" key="6">
    <source>
    </source>
</evidence>
<evidence type="ECO:0000305" key="7"/>
<evidence type="ECO:0000305" key="8">
    <source>
    </source>
</evidence>
<evidence type="ECO:0000305" key="9">
    <source>
    </source>
</evidence>
<comment type="function">
    <text evidence="3 4 6">Protein phosphatase able to dephosphorylate StkP-P and a phosphothreonine residue in a phosphopeptide synthetic substrate. PhpP and its cognate protein kinase StkP appear to constitute a functional signaling couple in vivo, PhpP's primary role probably being to control phosphorylation levels of StkP and of its targets (which include LocZ, DivIVA and KhpB (also called EloR/Jag)). PhpP thus performs an essential control of StkP activity. Overexpression confers an stkP deletion-like phenotype.</text>
</comment>
<comment type="catalytic activity">
    <reaction evidence="3">
        <text>O-phospho-L-seryl-[protein] + H2O = L-seryl-[protein] + phosphate</text>
        <dbReference type="Rhea" id="RHEA:20629"/>
        <dbReference type="Rhea" id="RHEA-COMP:9863"/>
        <dbReference type="Rhea" id="RHEA-COMP:11604"/>
        <dbReference type="ChEBI" id="CHEBI:15377"/>
        <dbReference type="ChEBI" id="CHEBI:29999"/>
        <dbReference type="ChEBI" id="CHEBI:43474"/>
        <dbReference type="ChEBI" id="CHEBI:83421"/>
        <dbReference type="EC" id="3.1.3.16"/>
    </reaction>
</comment>
<comment type="catalytic activity">
    <reaction evidence="3">
        <text>O-phospho-L-threonyl-[protein] + H2O = L-threonyl-[protein] + phosphate</text>
        <dbReference type="Rhea" id="RHEA:47004"/>
        <dbReference type="Rhea" id="RHEA-COMP:11060"/>
        <dbReference type="Rhea" id="RHEA-COMP:11605"/>
        <dbReference type="ChEBI" id="CHEBI:15377"/>
        <dbReference type="ChEBI" id="CHEBI:30013"/>
        <dbReference type="ChEBI" id="CHEBI:43474"/>
        <dbReference type="ChEBI" id="CHEBI:61977"/>
        <dbReference type="EC" id="3.1.3.16"/>
    </reaction>
</comment>
<comment type="cofactor">
    <cofactor evidence="3">
        <name>Mn(2+)</name>
        <dbReference type="ChEBI" id="CHEBI:29035"/>
    </cofactor>
    <text evidence="3">Binds 2 manganese ions per subunit. Other divalent cations, such as Mg(2+) or Ca(2+), cannot serve as cofactors.</text>
</comment>
<comment type="activity regulation">
    <text evidence="3">Phosphatase activity is inhibited by NaF but not by okadaic acid.</text>
</comment>
<comment type="subunit">
    <text evidence="4">Interacts with the kinase domain of StkP.</text>
</comment>
<comment type="interaction">
    <interactant intactId="EBI-6405646">
        <id>Q8KY51</id>
    </interactant>
    <interactant intactId="EBI-6405629">
        <id>Q8KY50</id>
        <label>stkP</label>
    </interactant>
    <organismsDiffer>false</organismsDiffer>
    <experiments>2</experiments>
</comment>
<comment type="interaction">
    <interactant intactId="EBI-6405646">
        <id>Q8KY51</id>
    </interactant>
    <interactant intactId="EBI-6507368">
        <id>A0A0H2UNK2</id>
        <label>SP_0376</label>
    </interactant>
    <organismsDiffer>true</organismsDiffer>
    <experiments>2</experiments>
</comment>
<comment type="subcellular location">
    <subcellularLocation>
        <location evidence="4 5">Cytoplasm</location>
    </subcellularLocation>
    <text>Mainly localizes to the midcell division sites. PhpP and StkP interact within a membrane-associated protein complex facing the cytoplasm.</text>
</comment>
<comment type="induction">
    <text evidence="3">The phpP and stkP genes form an operon.</text>
</comment>
<comment type="disruption phenotype">
    <text evidence="4 6">Attempts to construct an in-frame deletion of the phpP gene were unsuccessful and an allele encoding inactive D231A PhpP phosphatase is lethal in a wild-type genetic background. This suggests that PhpP is essential (PubMed:19502404). Another group has generated a phpP deletion using a two-step negative selection strategy, which has a hyper-phosphorylated phenotype. Cells grow more slowly, are smaller and form short chains, reach a lower final density, are more sensitive to oxidative stress, growth is impaired at 40 degrees Celsius, competence is decreased and mild defects are seen in cell division. Unlike the stkP deletion, cells are unaffected by high salt, acidic and basic pH (PubMed:27776484).</text>
</comment>
<comment type="miscellaneous">
    <text evidence="8 9">Strain Rx1 is unencapsulated.</text>
</comment>
<comment type="similarity">
    <text evidence="7">Belongs to the PP2C family.</text>
</comment>
<keyword id="KW-0963">Cytoplasm</keyword>
<keyword id="KW-0378">Hydrolase</keyword>
<keyword id="KW-0464">Manganese</keyword>
<keyword id="KW-0479">Metal-binding</keyword>
<keyword id="KW-0904">Protein phosphatase</keyword>
<accession>Q8KY51</accession>
<reference key="1">
    <citation type="submission" date="2000-07" db="EMBL/GenBank/DDBJ databases">
        <title>A serine/threonine kinase involved in competence regulation.</title>
        <authorList>
            <person name="Echenique J.R."/>
            <person name="Trombe M.C."/>
        </authorList>
    </citation>
    <scope>NUCLEOTIDE SEQUENCE [GENOMIC DNA]</scope>
    <source>
        <strain>Rx / Cp1015</strain>
    </source>
</reference>
<reference key="2">
    <citation type="journal article" date="2005" name="FEBS J.">
        <title>Characterization of a eukaryotic type serine/threonine protein kinase and protein phosphatase of Streptococcus pneumoniae and identification of kinase substrates.</title>
        <authorList>
            <person name="Novakova L."/>
            <person name="Saskova L."/>
            <person name="Pallova P."/>
            <person name="Janecek J."/>
            <person name="Novotna J."/>
            <person name="Ulrych A."/>
            <person name="Echenique J."/>
            <person name="Trombe M.C."/>
            <person name="Branny P."/>
        </authorList>
    </citation>
    <scope>FUNCTION</scope>
    <scope>CATALYTIC ACTIVITY</scope>
    <scope>COFACTOR</scope>
    <scope>ACTIVITY REGULATION</scope>
    <scope>OPERON STRUCTURE</scope>
    <scope>MUTAGENESIS OF ASP-192 AND ASP-231</scope>
    <source>
        <strain>Rx / Cp1015</strain>
    </source>
</reference>
<reference key="3">
    <citation type="journal article" date="2009" name="J. Bacteriol.">
        <title>The StkP/PhpP signaling couple in Streptococcus pneumoniae: cellular organization and physiological characterization.</title>
        <authorList>
            <person name="Osaki M."/>
            <person name="Arcondeguy T."/>
            <person name="Bastide A."/>
            <person name="Touriol C."/>
            <person name="Prats H."/>
            <person name="Trombe M.C."/>
        </authorList>
    </citation>
    <scope>FUNCTION</scope>
    <scope>INTERACTION WITH STKP</scope>
    <scope>SUBCELLULAR LOCATION</scope>
    <scope>DISRUPTION PHENOTYPE</scope>
    <source>
        <strain>Rx / Cp1015</strain>
    </source>
</reference>
<reference key="4">
    <citation type="journal article" date="2012" name="Proc. Natl. Acad. Sci. U.S.A.">
        <title>Control of cell division in Streptococcus pneumoniae by the conserved Ser/Thr protein kinase StkP.</title>
        <authorList>
            <person name="Beilharz K."/>
            <person name="Novakova L."/>
            <person name="Fadda D."/>
            <person name="Branny P."/>
            <person name="Massidda O."/>
            <person name="Veening J.W."/>
        </authorList>
    </citation>
    <scope>SUBCELLULAR LOCATION</scope>
    <source>
        <strain>Rx1</strain>
    </source>
</reference>
<reference key="5">
    <citation type="journal article" date="2016" name="BMC Microbiol.">
        <title>Characterization of pneumococcal Ser/Thr protein phosphatase phpP mutant and identification of a novel PhpP substrate, putative RNA binding protein Jag.</title>
        <authorList>
            <person name="Ulrych A."/>
            <person name="Holeckova N."/>
            <person name="Goldova J."/>
            <person name="Doubravova L."/>
            <person name="Benada O."/>
            <person name="Kofronova O."/>
            <person name="Halada P."/>
            <person name="Branny P."/>
        </authorList>
    </citation>
    <scope>FUNCTION</scope>
    <scope>SUBCELLULAR LOCATION</scope>
    <scope>DISRUPTION PHENOTYPE</scope>
    <scope>MUTAGENESIS OF ASP-192 AND ASP-231</scope>
    <source>
        <strain>Rx1</strain>
    </source>
</reference>
<proteinExistence type="evidence at protein level"/>
<dbReference type="EC" id="3.1.3.16"/>
<dbReference type="EMBL" id="AF285441">
    <property type="protein sequence ID" value="AAM47529.1"/>
    <property type="molecule type" value="Genomic_DNA"/>
</dbReference>
<dbReference type="SMR" id="Q8KY51"/>
<dbReference type="IntAct" id="Q8KY51">
    <property type="interactions" value="2"/>
</dbReference>
<dbReference type="PaxDb" id="170187-SP_1733"/>
<dbReference type="eggNOG" id="COG0631">
    <property type="taxonomic scope" value="Bacteria"/>
</dbReference>
<dbReference type="BRENDA" id="3.1.3.16">
    <property type="organism ID" value="16490"/>
</dbReference>
<dbReference type="GO" id="GO:0005737">
    <property type="term" value="C:cytoplasm"/>
    <property type="evidence" value="ECO:0007669"/>
    <property type="project" value="UniProtKB-SubCell"/>
</dbReference>
<dbReference type="GO" id="GO:0046872">
    <property type="term" value="F:metal ion binding"/>
    <property type="evidence" value="ECO:0007669"/>
    <property type="project" value="UniProtKB-KW"/>
</dbReference>
<dbReference type="GO" id="GO:0004722">
    <property type="term" value="F:protein serine/threonine phosphatase activity"/>
    <property type="evidence" value="ECO:0007669"/>
    <property type="project" value="UniProtKB-EC"/>
</dbReference>
<dbReference type="CDD" id="cd00143">
    <property type="entry name" value="PP2Cc"/>
    <property type="match status" value="1"/>
</dbReference>
<dbReference type="FunFam" id="3.60.40.10:FF:000002">
    <property type="entry name" value="Serine/threonine phosphatase stp"/>
    <property type="match status" value="1"/>
</dbReference>
<dbReference type="Gene3D" id="3.60.40.10">
    <property type="entry name" value="PPM-type phosphatase domain"/>
    <property type="match status" value="1"/>
</dbReference>
<dbReference type="InterPro" id="IPR015655">
    <property type="entry name" value="PP2C"/>
</dbReference>
<dbReference type="InterPro" id="IPR036457">
    <property type="entry name" value="PPM-type-like_dom_sf"/>
</dbReference>
<dbReference type="InterPro" id="IPR001932">
    <property type="entry name" value="PPM-type_phosphatase-like_dom"/>
</dbReference>
<dbReference type="NCBIfam" id="NF033484">
    <property type="entry name" value="Stp1_PP2C_phos"/>
    <property type="match status" value="1"/>
</dbReference>
<dbReference type="PANTHER" id="PTHR47992">
    <property type="entry name" value="PROTEIN PHOSPHATASE"/>
    <property type="match status" value="1"/>
</dbReference>
<dbReference type="Pfam" id="PF13672">
    <property type="entry name" value="PP2C_2"/>
    <property type="match status" value="1"/>
</dbReference>
<dbReference type="SMART" id="SM00331">
    <property type="entry name" value="PP2C_SIG"/>
    <property type="match status" value="1"/>
</dbReference>
<dbReference type="SMART" id="SM00332">
    <property type="entry name" value="PP2Cc"/>
    <property type="match status" value="1"/>
</dbReference>
<dbReference type="SUPFAM" id="SSF81606">
    <property type="entry name" value="PP2C-like"/>
    <property type="match status" value="1"/>
</dbReference>
<dbReference type="PROSITE" id="PS51746">
    <property type="entry name" value="PPM_2"/>
    <property type="match status" value="1"/>
</dbReference>
<name>PHPP_STREE</name>
<protein>
    <recommendedName>
        <fullName>Protein phosphatase PhpP</fullName>
        <ecNumber>3.1.3.16</ecNumber>
    </recommendedName>
    <alternativeName>
        <fullName>PP2C-type phosphatase</fullName>
    </alternativeName>
    <alternativeName>
        <fullName>Ser/Thr phosphoprotein phosphatase</fullName>
        <shortName>STPP</shortName>
    </alternativeName>
</protein>
<gene>
    <name type="primary">phpP</name>
</gene>
<sequence length="246" mass="27104">MEISLLTDVGQKRTNNQDYVNHYVNRAGRTMIILADGMGGHRAGNIASEMAVTDLGVAWVDTQIDTVNEVREWFAHYLEIENQKIHQLGQDEAYRGMGTTLEVLAIIDNQAIYAHIGDSRIGLIRGEEYHQLTSDHSLVNELLKAGQLTPEEAEAHPQKNIITQSIGQKDEIQPDFGTVILESGDYLLLDSDGLTNMISGSEIRDIVTSDIPLADKTETLVRFANNAGGLDNITVALVSMNEEDAE</sequence>
<organism>
    <name type="scientific">Streptococcus pneumoniae</name>
    <dbReference type="NCBI Taxonomy" id="1313"/>
    <lineage>
        <taxon>Bacteria</taxon>
        <taxon>Bacillati</taxon>
        <taxon>Bacillota</taxon>
        <taxon>Bacilli</taxon>
        <taxon>Lactobacillales</taxon>
        <taxon>Streptococcaceae</taxon>
        <taxon>Streptococcus</taxon>
    </lineage>
</organism>
<feature type="chain" id="PRO_0000418147" description="Protein phosphatase PhpP">
    <location>
        <begin position="1"/>
        <end position="246"/>
    </location>
</feature>
<feature type="domain" description="PPM-type phosphatase" evidence="2">
    <location>
        <begin position="2"/>
        <end position="240"/>
    </location>
</feature>
<feature type="binding site" evidence="1">
    <location>
        <position position="36"/>
    </location>
    <ligand>
        <name>Mn(2+)</name>
        <dbReference type="ChEBI" id="CHEBI:29035"/>
        <label>1</label>
    </ligand>
</feature>
<feature type="binding site" evidence="1">
    <location>
        <position position="36"/>
    </location>
    <ligand>
        <name>Mn(2+)</name>
        <dbReference type="ChEBI" id="CHEBI:29035"/>
        <label>2</label>
    </ligand>
</feature>
<feature type="binding site" evidence="1">
    <location>
        <position position="37"/>
    </location>
    <ligand>
        <name>Mn(2+)</name>
        <dbReference type="ChEBI" id="CHEBI:29035"/>
        <label>1</label>
    </ligand>
</feature>
<feature type="binding site" evidence="1">
    <location>
        <position position="192"/>
    </location>
    <ligand>
        <name>Mn(2+)</name>
        <dbReference type="ChEBI" id="CHEBI:29035"/>
        <label>2</label>
    </ligand>
</feature>
<feature type="binding site" evidence="1">
    <location>
        <position position="231"/>
    </location>
    <ligand>
        <name>Mn(2+)</name>
        <dbReference type="ChEBI" id="CHEBI:29035"/>
        <label>2</label>
    </ligand>
</feature>
<feature type="mutagenesis site" description="Loss of phosphatase activity, partially associates with cell membrane." evidence="3 6">
    <original>D</original>
    <variation>A</variation>
    <location>
        <position position="192"/>
    </location>
</feature>
<feature type="mutagenesis site" description="Loss of phosphatase activity, loss of association with cell membrane." evidence="3 6">
    <original>D</original>
    <variation>A</variation>
    <location>
        <position position="231"/>
    </location>
</feature>